<reference key="1">
    <citation type="journal article" date="2008" name="Nature">
        <title>A novel route for ATP acquisition by the remnant mitochondria of Encephalitozoon cuniculi.</title>
        <authorList>
            <person name="Tsaousis A.D."/>
            <person name="Kunji E.R.S."/>
            <person name="Goldberg A.V."/>
            <person name="Lucocq J.M."/>
            <person name="Hirt R.P."/>
            <person name="Embley T.M."/>
        </authorList>
    </citation>
    <scope>NUCLEOTIDE SEQUENCE [GENOMIC DNA]</scope>
    <scope>SUBCELLULAR LOCATION</scope>
    <scope>FUNCTION</scope>
    <scope>BIOPHYSICOCHEMICAL PROPERTIES</scope>
</reference>
<reference key="2">
    <citation type="journal article" date="2001" name="Nature">
        <title>Genome sequence and gene compaction of the eukaryote parasite Encephalitozoon cuniculi.</title>
        <authorList>
            <person name="Katinka M.D."/>
            <person name="Duprat S."/>
            <person name="Cornillot E."/>
            <person name="Metenier G."/>
            <person name="Thomarat F."/>
            <person name="Prensier G."/>
            <person name="Barbe V."/>
            <person name="Peyretaillade E."/>
            <person name="Brottier P."/>
            <person name="Wincker P."/>
            <person name="Delbac F."/>
            <person name="El Alaoui H."/>
            <person name="Peyret P."/>
            <person name="Saurin W."/>
            <person name="Gouy M."/>
            <person name="Weissenbach J."/>
            <person name="Vivares C.P."/>
        </authorList>
    </citation>
    <scope>NUCLEOTIDE SEQUENCE [LARGE SCALE GENOMIC DNA]</scope>
    <source>
        <strain>GB-M1</strain>
    </source>
</reference>
<feature type="chain" id="PRO_0000382923" description="ADP,ATP carrier protein 1">
    <location>
        <begin position="1"/>
        <end position="559"/>
    </location>
</feature>
<feature type="transmembrane region" description="Helical" evidence="1">
    <location>
        <begin position="46"/>
        <end position="66"/>
    </location>
</feature>
<feature type="transmembrane region" description="Helical" evidence="1">
    <location>
        <begin position="79"/>
        <end position="99"/>
    </location>
</feature>
<feature type="transmembrane region" description="Helical" evidence="1">
    <location>
        <begin position="111"/>
        <end position="131"/>
    </location>
</feature>
<feature type="transmembrane region" description="Helical" evidence="1">
    <location>
        <begin position="174"/>
        <end position="194"/>
    </location>
</feature>
<feature type="transmembrane region" description="Helical" evidence="1">
    <location>
        <begin position="210"/>
        <end position="230"/>
    </location>
</feature>
<feature type="transmembrane region" description="Helical" evidence="1">
    <location>
        <begin position="242"/>
        <end position="262"/>
    </location>
</feature>
<feature type="transmembrane region" description="Helical" evidence="1">
    <location>
        <begin position="305"/>
        <end position="325"/>
    </location>
</feature>
<feature type="transmembrane region" description="Helical" evidence="1">
    <location>
        <begin position="354"/>
        <end position="373"/>
    </location>
</feature>
<feature type="transmembrane region" description="Helical" evidence="1">
    <location>
        <begin position="377"/>
        <end position="397"/>
    </location>
</feature>
<feature type="transmembrane region" description="Helical" evidence="1">
    <location>
        <begin position="425"/>
        <end position="447"/>
    </location>
</feature>
<feature type="transmembrane region" description="Helical" evidence="1">
    <location>
        <begin position="473"/>
        <end position="493"/>
    </location>
</feature>
<feature type="transmembrane region" description="Helical" evidence="1">
    <location>
        <begin position="503"/>
        <end position="523"/>
    </location>
</feature>
<feature type="region of interest" description="Disordered" evidence="2">
    <location>
        <begin position="1"/>
        <end position="22"/>
    </location>
</feature>
<feature type="compositionally biased region" description="Polar residues" evidence="2">
    <location>
        <begin position="1"/>
        <end position="10"/>
    </location>
</feature>
<feature type="glycosylation site" description="N-linked (GlcNAc...) asparagine" evidence="1">
    <location>
        <position position="8"/>
    </location>
</feature>
<feature type="glycosylation site" description="N-linked (GlcNAc...) asparagine" evidence="1">
    <location>
        <position position="196"/>
    </location>
</feature>
<feature type="glycosylation site" description="N-linked (GlcNAc...) asparagine" evidence="1">
    <location>
        <position position="290"/>
    </location>
</feature>
<feature type="glycosylation site" description="N-linked (GlcNAc...) asparagine" evidence="1">
    <location>
        <position position="403"/>
    </location>
</feature>
<name>NTT1_ENCCU</name>
<organism>
    <name type="scientific">Encephalitozoon cuniculi (strain GB-M1)</name>
    <name type="common">Microsporidian parasite</name>
    <dbReference type="NCBI Taxonomy" id="284813"/>
    <lineage>
        <taxon>Eukaryota</taxon>
        <taxon>Fungi</taxon>
        <taxon>Fungi incertae sedis</taxon>
        <taxon>Microsporidia</taxon>
        <taxon>Unikaryonidae</taxon>
        <taxon>Encephalitozoon</taxon>
    </lineage>
</organism>
<sequence length="559" mass="63516">MNEVENNNHSFPREDIPTEDEIEEEANSRQGILRYFRVARAEYTKFALLGLMFGIIGFIYSFMRILKDMFVMVRQEPTTILFIKIFYILPVSMALVFLIQYMLGTKTVSRIFSIFCGGFASLFFLCGAVFLIEEQVSPSKFLFRDMFIDGKMSSRSLNVFKSMFLTLNEPLATIVFISAEMWGSLVLSYLFLSFLNESCTIRQFSRFIPPLIIITNVSLFLSATVAGAFFKLREKLAFQQNQVLLSGIFIFQGFLVVLVIFLKIYLERVTMKRPLFIVSSGSRRKKAKANVSFSEGLEIMSQSKLLLAMSLIVLFFNISYNMVESTFKVGVKVAAEYFNEEKGKYSGKFNRIDQYMTSVVVICLNLSPFSSYVETRGFLLVGLITPIVTLMAIVLFLGSALYNTSMEESGLGIVNGLFPGGKPLYVLENYFGVIFMSLLKITKYSAFDICKEKLGMRINPTYRARFKSVYDGIFGKLGKSIGSIYGLLMFEALDTEDLRKATPITAGIIFIFIVMWVKAIIYLSRSYESAVQHNRDVDIDMTEKAKKSLETPEEPKVVD</sequence>
<proteinExistence type="evidence at protein level"/>
<dbReference type="EMBL" id="EU040266">
    <property type="protein sequence ID" value="ABW20407.1"/>
    <property type="molecule type" value="Genomic_DNA"/>
</dbReference>
<dbReference type="EMBL" id="AL590448">
    <property type="protein sequence ID" value="CAD26436.1"/>
    <property type="molecule type" value="Genomic_DNA"/>
</dbReference>
<dbReference type="RefSeq" id="NP_597260.1">
    <property type="nucleotide sequence ID" value="NM_001041869.1"/>
</dbReference>
<dbReference type="TCDB" id="2.A.12.1.10">
    <property type="family name" value="the atp:adp antiporter (aaa) family"/>
</dbReference>
<dbReference type="GlyCosmos" id="Q8SRA2">
    <property type="glycosylation" value="4 sites, No reported glycans"/>
</dbReference>
<dbReference type="GeneID" id="859682"/>
<dbReference type="KEGG" id="ecu:ECU08_1300"/>
<dbReference type="VEuPathDB" id="MicrosporidiaDB:ECU08_1300"/>
<dbReference type="HOGENOM" id="CLU_023964_1_0_1"/>
<dbReference type="InParanoid" id="Q8SRA2"/>
<dbReference type="OMA" id="RKVIWPI"/>
<dbReference type="OrthoDB" id="2190844at2759"/>
<dbReference type="Proteomes" id="UP000000819">
    <property type="component" value="Chromosome VIII"/>
</dbReference>
<dbReference type="GO" id="GO:0005886">
    <property type="term" value="C:plasma membrane"/>
    <property type="evidence" value="ECO:0007669"/>
    <property type="project" value="UniProtKB-SubCell"/>
</dbReference>
<dbReference type="GO" id="GO:0005524">
    <property type="term" value="F:ATP binding"/>
    <property type="evidence" value="ECO:0007669"/>
    <property type="project" value="UniProtKB-KW"/>
</dbReference>
<dbReference type="GO" id="GO:0005471">
    <property type="term" value="F:ATP:ADP antiporter activity"/>
    <property type="evidence" value="ECO:0007669"/>
    <property type="project" value="InterPro"/>
</dbReference>
<dbReference type="InterPro" id="IPR004667">
    <property type="entry name" value="ADP_ATP_car_bac_type"/>
</dbReference>
<dbReference type="PANTHER" id="PTHR31187">
    <property type="match status" value="1"/>
</dbReference>
<dbReference type="PANTHER" id="PTHR31187:SF1">
    <property type="entry name" value="ADP,ATP CARRIER PROTEIN 1"/>
    <property type="match status" value="1"/>
</dbReference>
<dbReference type="Pfam" id="PF03219">
    <property type="entry name" value="TLC"/>
    <property type="match status" value="1"/>
</dbReference>
<accession>Q8SRA2</accession>
<comment type="function">
    <text evidence="3">ATP transporter involved in the uptake of ATP from the host cell cytoplasm. Provides the microsporidian cell with host ATP in exchange for ADP. This is an obligate exchange system. This energy acquiring activity is an important component of microsporidian parasitism.</text>
</comment>
<comment type="biophysicochemical properties">
    <kinetics>
        <KM evidence="3">11.4 uM for ATP uptake</KM>
    </kinetics>
</comment>
<comment type="subcellular location">
    <subcellularLocation>
        <location evidence="3">Cell membrane</location>
        <topology evidence="3">Multi-pass membrane protein</topology>
    </subcellularLocation>
    <text>Only found on the surface of parasites living inside host cells.</text>
</comment>
<comment type="similarity">
    <text evidence="4">Belongs to the ADP/ATP translocase tlc family.</text>
</comment>
<protein>
    <recommendedName>
        <fullName>ADP,ATP carrier protein 1</fullName>
    </recommendedName>
    <alternativeName>
        <fullName>ADP/ATP translocase 1</fullName>
    </alternativeName>
    <alternativeName>
        <fullName>Nucleotide transporter 1</fullName>
    </alternativeName>
</protein>
<keyword id="KW-0067">ATP-binding</keyword>
<keyword id="KW-1003">Cell membrane</keyword>
<keyword id="KW-0325">Glycoprotein</keyword>
<keyword id="KW-0472">Membrane</keyword>
<keyword id="KW-0547">Nucleotide-binding</keyword>
<keyword id="KW-1185">Reference proteome</keyword>
<keyword id="KW-0812">Transmembrane</keyword>
<keyword id="KW-1133">Transmembrane helix</keyword>
<keyword id="KW-0813">Transport</keyword>
<evidence type="ECO:0000255" key="1"/>
<evidence type="ECO:0000256" key="2">
    <source>
        <dbReference type="SAM" id="MobiDB-lite"/>
    </source>
</evidence>
<evidence type="ECO:0000269" key="3">
    <source>
    </source>
</evidence>
<evidence type="ECO:0000305" key="4"/>
<gene>
    <name type="primary">NTT1</name>
    <name type="ordered locus">ECU08_1300</name>
</gene>